<evidence type="ECO:0000255" key="1">
    <source>
        <dbReference type="HAMAP-Rule" id="MF_00475"/>
    </source>
</evidence>
<name>TRPR_SALAR</name>
<protein>
    <recommendedName>
        <fullName evidence="1">Trp operon repressor</fullName>
    </recommendedName>
</protein>
<proteinExistence type="inferred from homology"/>
<accession>A9MR96</accession>
<comment type="function">
    <text evidence="1">This protein is an aporepressor. When complexed with L-tryptophan it binds the operator region of the trp operon (5'-ACTAGT-'3') and prevents the initiation of transcription. The complex also regulates trp repressor biosynthesis by binding to its regulatory region.</text>
</comment>
<comment type="subunit">
    <text evidence="1">Homodimer.</text>
</comment>
<comment type="subcellular location">
    <subcellularLocation>
        <location evidence="1">Cytoplasm</location>
    </subcellularLocation>
</comment>
<comment type="similarity">
    <text evidence="1">Belongs to the TrpR family.</text>
</comment>
<dbReference type="EMBL" id="CP000880">
    <property type="protein sequence ID" value="ABX22844.1"/>
    <property type="molecule type" value="Genomic_DNA"/>
</dbReference>
<dbReference type="SMR" id="A9MR96"/>
<dbReference type="STRING" id="41514.SARI_03000"/>
<dbReference type="KEGG" id="ses:SARI_03000"/>
<dbReference type="HOGENOM" id="CLU_147939_0_0_6"/>
<dbReference type="Proteomes" id="UP000002084">
    <property type="component" value="Chromosome"/>
</dbReference>
<dbReference type="GO" id="GO:0005737">
    <property type="term" value="C:cytoplasm"/>
    <property type="evidence" value="ECO:0007669"/>
    <property type="project" value="UniProtKB-SubCell"/>
</dbReference>
<dbReference type="GO" id="GO:0003700">
    <property type="term" value="F:DNA-binding transcription factor activity"/>
    <property type="evidence" value="ECO:0007669"/>
    <property type="project" value="InterPro"/>
</dbReference>
<dbReference type="GO" id="GO:0043565">
    <property type="term" value="F:sequence-specific DNA binding"/>
    <property type="evidence" value="ECO:0007669"/>
    <property type="project" value="InterPro"/>
</dbReference>
<dbReference type="GO" id="GO:0045892">
    <property type="term" value="P:negative regulation of DNA-templated transcription"/>
    <property type="evidence" value="ECO:0007669"/>
    <property type="project" value="UniProtKB-UniRule"/>
</dbReference>
<dbReference type="FunFam" id="1.10.1270.10:FF:000001">
    <property type="entry name" value="Trp operon repressor"/>
    <property type="match status" value="1"/>
</dbReference>
<dbReference type="Gene3D" id="1.10.1270.10">
    <property type="entry name" value="TrpR-like"/>
    <property type="match status" value="1"/>
</dbReference>
<dbReference type="HAMAP" id="MF_00475">
    <property type="entry name" value="Trp_repressor"/>
    <property type="match status" value="1"/>
</dbReference>
<dbReference type="InterPro" id="IPR000831">
    <property type="entry name" value="Trp_repress"/>
</dbReference>
<dbReference type="InterPro" id="IPR013335">
    <property type="entry name" value="Trp_repress_bac"/>
</dbReference>
<dbReference type="InterPro" id="IPR010921">
    <property type="entry name" value="Trp_repressor/repl_initiator"/>
</dbReference>
<dbReference type="InterPro" id="IPR038116">
    <property type="entry name" value="TrpR-like_sf"/>
</dbReference>
<dbReference type="NCBIfam" id="TIGR01321">
    <property type="entry name" value="TrpR"/>
    <property type="match status" value="1"/>
</dbReference>
<dbReference type="PANTHER" id="PTHR38025">
    <property type="entry name" value="TRP OPERON REPRESSOR"/>
    <property type="match status" value="1"/>
</dbReference>
<dbReference type="PANTHER" id="PTHR38025:SF1">
    <property type="entry name" value="TRP OPERON REPRESSOR"/>
    <property type="match status" value="1"/>
</dbReference>
<dbReference type="Pfam" id="PF01371">
    <property type="entry name" value="Trp_repressor"/>
    <property type="match status" value="1"/>
</dbReference>
<dbReference type="PIRSF" id="PIRSF003196">
    <property type="entry name" value="Trp_repressor"/>
    <property type="match status" value="1"/>
</dbReference>
<dbReference type="SUPFAM" id="SSF48295">
    <property type="entry name" value="TrpR-like"/>
    <property type="match status" value="1"/>
</dbReference>
<keyword id="KW-0963">Cytoplasm</keyword>
<keyword id="KW-0238">DNA-binding</keyword>
<keyword id="KW-1185">Reference proteome</keyword>
<keyword id="KW-0678">Repressor</keyword>
<keyword id="KW-0804">Transcription</keyword>
<keyword id="KW-0805">Transcription regulation</keyword>
<organism>
    <name type="scientific">Salmonella arizonae (strain ATCC BAA-731 / CDC346-86 / RSK2980)</name>
    <dbReference type="NCBI Taxonomy" id="41514"/>
    <lineage>
        <taxon>Bacteria</taxon>
        <taxon>Pseudomonadati</taxon>
        <taxon>Pseudomonadota</taxon>
        <taxon>Gammaproteobacteria</taxon>
        <taxon>Enterobacterales</taxon>
        <taxon>Enterobacteriaceae</taxon>
        <taxon>Salmonella</taxon>
    </lineage>
</organism>
<feature type="chain" id="PRO_1000081255" description="Trp operon repressor">
    <location>
        <begin position="1"/>
        <end position="108"/>
    </location>
</feature>
<feature type="DNA-binding region" evidence="1">
    <location>
        <begin position="68"/>
        <end position="91"/>
    </location>
</feature>
<gene>
    <name evidence="1" type="primary">trpR</name>
    <name type="ordered locus">SARI_03000</name>
</gene>
<sequence length="108" mass="12400">MTQQSPYSAAMAEQRHQEWLRFVELLKQSYAEDLHIPLLNLMLTPDEREALGTRVRIIEELLRGEMSQRELKNELGAGIATITRGSNSLKSAPVELRQWLDQVLLKEA</sequence>
<reference key="1">
    <citation type="submission" date="2007-11" db="EMBL/GenBank/DDBJ databases">
        <authorList>
            <consortium name="The Salmonella enterica serovar Arizonae Genome Sequencing Project"/>
            <person name="McClelland M."/>
            <person name="Sanderson E.K."/>
            <person name="Porwollik S."/>
            <person name="Spieth J."/>
            <person name="Clifton W.S."/>
            <person name="Fulton R."/>
            <person name="Chunyan W."/>
            <person name="Wollam A."/>
            <person name="Shah N."/>
            <person name="Pepin K."/>
            <person name="Bhonagiri V."/>
            <person name="Nash W."/>
            <person name="Johnson M."/>
            <person name="Thiruvilangam P."/>
            <person name="Wilson R."/>
        </authorList>
    </citation>
    <scope>NUCLEOTIDE SEQUENCE [LARGE SCALE GENOMIC DNA]</scope>
    <source>
        <strain>ATCC BAA-731 / CDC346-86 / RSK2980</strain>
    </source>
</reference>